<gene>
    <name evidence="1" type="primary">clpX</name>
    <name type="ordered locus">XOO0933</name>
</gene>
<reference key="1">
    <citation type="journal article" date="2005" name="Jpn. Agric. Res. Q.">
        <title>Genome sequence of Xanthomonas oryzae pv. oryzae suggests contribution of large numbers of effector genes and insertion sequences to its race diversity.</title>
        <authorList>
            <person name="Ochiai H."/>
            <person name="Inoue Y."/>
            <person name="Takeya M."/>
            <person name="Sasaki A."/>
            <person name="Kaku H."/>
        </authorList>
    </citation>
    <scope>NUCLEOTIDE SEQUENCE [LARGE SCALE GENOMIC DNA]</scope>
    <source>
        <strain>MAFF 311018</strain>
    </source>
</reference>
<proteinExistence type="inferred from homology"/>
<keyword id="KW-0067">ATP-binding</keyword>
<keyword id="KW-0143">Chaperone</keyword>
<keyword id="KW-0479">Metal-binding</keyword>
<keyword id="KW-0547">Nucleotide-binding</keyword>
<keyword id="KW-0862">Zinc</keyword>
<sequence>MSEDRQGRSGDSNKILYCSFCGKSQHEVRKLIAGPSVFICDECVELCNDIIREELEEKAQSARSSLPKPREILEVLDQYVIGQLRAKRTLAVAVYNHYKRIESRSKNDDVELAKSNILLVGPTGSGKTLLAETLARLLNVPFTIADATTLTEAGYVGEDVENIIQKLLQKCDYDVEKAQQGIVYIDEIDKISRKSENPSITRDVSGEGVQQALLKLIEGTVASVPPQGGRKHPQQEFLQVDTKNILFICGGAFAGLDKVIQQRSNDAGGIGFGAKVKSSERKQEVGKILAEVEPEDLIKFGLIPEFVGRLPVVATLEELDEPALIKILTEPKNAITKQFKKLFDMEGVELEFRADALSAIAKKALKRKTGARGLRTIVESVLLDTMYELPSQENVSKVVVDESVIEHKSEPYLIYQAQPAPAKAASGD</sequence>
<organism>
    <name type="scientific">Xanthomonas oryzae pv. oryzae (strain MAFF 311018)</name>
    <dbReference type="NCBI Taxonomy" id="342109"/>
    <lineage>
        <taxon>Bacteria</taxon>
        <taxon>Pseudomonadati</taxon>
        <taxon>Pseudomonadota</taxon>
        <taxon>Gammaproteobacteria</taxon>
        <taxon>Lysobacterales</taxon>
        <taxon>Lysobacteraceae</taxon>
        <taxon>Xanthomonas</taxon>
    </lineage>
</organism>
<comment type="function">
    <text evidence="1">ATP-dependent specificity component of the Clp protease. It directs the protease to specific substrates. Can perform chaperone functions in the absence of ClpP.</text>
</comment>
<comment type="subunit">
    <text evidence="1">Component of the ClpX-ClpP complex. Forms a hexameric ring that, in the presence of ATP, binds to fourteen ClpP subunits assembled into a disk-like structure with a central cavity, resembling the structure of eukaryotic proteasomes.</text>
</comment>
<comment type="similarity">
    <text evidence="1">Belongs to the ClpX chaperone family.</text>
</comment>
<dbReference type="EMBL" id="AP008229">
    <property type="protein sequence ID" value="BAE67688.1"/>
    <property type="molecule type" value="Genomic_DNA"/>
</dbReference>
<dbReference type="RefSeq" id="WP_011257881.1">
    <property type="nucleotide sequence ID" value="NC_007705.1"/>
</dbReference>
<dbReference type="SMR" id="Q2P6Y9"/>
<dbReference type="GeneID" id="77338623"/>
<dbReference type="KEGG" id="xom:XOO0933"/>
<dbReference type="HOGENOM" id="CLU_014218_8_2_6"/>
<dbReference type="GO" id="GO:0009376">
    <property type="term" value="C:HslUV protease complex"/>
    <property type="evidence" value="ECO:0007669"/>
    <property type="project" value="TreeGrafter"/>
</dbReference>
<dbReference type="GO" id="GO:0005524">
    <property type="term" value="F:ATP binding"/>
    <property type="evidence" value="ECO:0007669"/>
    <property type="project" value="UniProtKB-UniRule"/>
</dbReference>
<dbReference type="GO" id="GO:0016887">
    <property type="term" value="F:ATP hydrolysis activity"/>
    <property type="evidence" value="ECO:0007669"/>
    <property type="project" value="InterPro"/>
</dbReference>
<dbReference type="GO" id="GO:0140662">
    <property type="term" value="F:ATP-dependent protein folding chaperone"/>
    <property type="evidence" value="ECO:0007669"/>
    <property type="project" value="InterPro"/>
</dbReference>
<dbReference type="GO" id="GO:0046983">
    <property type="term" value="F:protein dimerization activity"/>
    <property type="evidence" value="ECO:0007669"/>
    <property type="project" value="InterPro"/>
</dbReference>
<dbReference type="GO" id="GO:0051082">
    <property type="term" value="F:unfolded protein binding"/>
    <property type="evidence" value="ECO:0007669"/>
    <property type="project" value="UniProtKB-UniRule"/>
</dbReference>
<dbReference type="GO" id="GO:0008270">
    <property type="term" value="F:zinc ion binding"/>
    <property type="evidence" value="ECO:0007669"/>
    <property type="project" value="InterPro"/>
</dbReference>
<dbReference type="GO" id="GO:0051301">
    <property type="term" value="P:cell division"/>
    <property type="evidence" value="ECO:0007669"/>
    <property type="project" value="TreeGrafter"/>
</dbReference>
<dbReference type="GO" id="GO:0051603">
    <property type="term" value="P:proteolysis involved in protein catabolic process"/>
    <property type="evidence" value="ECO:0007669"/>
    <property type="project" value="TreeGrafter"/>
</dbReference>
<dbReference type="CDD" id="cd19497">
    <property type="entry name" value="RecA-like_ClpX"/>
    <property type="match status" value="1"/>
</dbReference>
<dbReference type="FunFam" id="1.10.8.60:FF:000002">
    <property type="entry name" value="ATP-dependent Clp protease ATP-binding subunit ClpX"/>
    <property type="match status" value="1"/>
</dbReference>
<dbReference type="FunFam" id="3.40.50.300:FF:000005">
    <property type="entry name" value="ATP-dependent Clp protease ATP-binding subunit ClpX"/>
    <property type="match status" value="1"/>
</dbReference>
<dbReference type="Gene3D" id="1.10.8.60">
    <property type="match status" value="1"/>
</dbReference>
<dbReference type="Gene3D" id="6.20.220.10">
    <property type="entry name" value="ClpX chaperone, C4-type zinc finger domain"/>
    <property type="match status" value="1"/>
</dbReference>
<dbReference type="Gene3D" id="3.40.50.300">
    <property type="entry name" value="P-loop containing nucleotide triphosphate hydrolases"/>
    <property type="match status" value="1"/>
</dbReference>
<dbReference type="HAMAP" id="MF_00175">
    <property type="entry name" value="ClpX"/>
    <property type="match status" value="1"/>
</dbReference>
<dbReference type="InterPro" id="IPR003593">
    <property type="entry name" value="AAA+_ATPase"/>
</dbReference>
<dbReference type="InterPro" id="IPR050052">
    <property type="entry name" value="ATP-dep_Clp_protease_ClpX"/>
</dbReference>
<dbReference type="InterPro" id="IPR003959">
    <property type="entry name" value="ATPase_AAA_core"/>
</dbReference>
<dbReference type="InterPro" id="IPR019489">
    <property type="entry name" value="Clp_ATPase_C"/>
</dbReference>
<dbReference type="InterPro" id="IPR004487">
    <property type="entry name" value="Clp_protease_ATP-bd_su_ClpX"/>
</dbReference>
<dbReference type="InterPro" id="IPR046425">
    <property type="entry name" value="ClpX_bact"/>
</dbReference>
<dbReference type="InterPro" id="IPR027417">
    <property type="entry name" value="P-loop_NTPase"/>
</dbReference>
<dbReference type="InterPro" id="IPR010603">
    <property type="entry name" value="Znf_CppX_C4"/>
</dbReference>
<dbReference type="InterPro" id="IPR038366">
    <property type="entry name" value="Znf_CppX_C4_sf"/>
</dbReference>
<dbReference type="NCBIfam" id="TIGR00382">
    <property type="entry name" value="clpX"/>
    <property type="match status" value="1"/>
</dbReference>
<dbReference type="NCBIfam" id="NF003745">
    <property type="entry name" value="PRK05342.1"/>
    <property type="match status" value="1"/>
</dbReference>
<dbReference type="PANTHER" id="PTHR48102:SF7">
    <property type="entry name" value="ATP-DEPENDENT CLP PROTEASE ATP-BINDING SUBUNIT CLPX-LIKE, MITOCHONDRIAL"/>
    <property type="match status" value="1"/>
</dbReference>
<dbReference type="PANTHER" id="PTHR48102">
    <property type="entry name" value="ATP-DEPENDENT CLP PROTEASE ATP-BINDING SUBUNIT CLPX-LIKE, MITOCHONDRIAL-RELATED"/>
    <property type="match status" value="1"/>
</dbReference>
<dbReference type="Pfam" id="PF07724">
    <property type="entry name" value="AAA_2"/>
    <property type="match status" value="1"/>
</dbReference>
<dbReference type="Pfam" id="PF10431">
    <property type="entry name" value="ClpB_D2-small"/>
    <property type="match status" value="1"/>
</dbReference>
<dbReference type="Pfam" id="PF06689">
    <property type="entry name" value="zf-C4_ClpX"/>
    <property type="match status" value="1"/>
</dbReference>
<dbReference type="SMART" id="SM00382">
    <property type="entry name" value="AAA"/>
    <property type="match status" value="1"/>
</dbReference>
<dbReference type="SMART" id="SM01086">
    <property type="entry name" value="ClpB_D2-small"/>
    <property type="match status" value="1"/>
</dbReference>
<dbReference type="SMART" id="SM00994">
    <property type="entry name" value="zf-C4_ClpX"/>
    <property type="match status" value="1"/>
</dbReference>
<dbReference type="SUPFAM" id="SSF57716">
    <property type="entry name" value="Glucocorticoid receptor-like (DNA-binding domain)"/>
    <property type="match status" value="1"/>
</dbReference>
<dbReference type="SUPFAM" id="SSF52540">
    <property type="entry name" value="P-loop containing nucleoside triphosphate hydrolases"/>
    <property type="match status" value="1"/>
</dbReference>
<dbReference type="PROSITE" id="PS51902">
    <property type="entry name" value="CLPX_ZB"/>
    <property type="match status" value="1"/>
</dbReference>
<feature type="chain" id="PRO_1000024702" description="ATP-dependent Clp protease ATP-binding subunit ClpX">
    <location>
        <begin position="1"/>
        <end position="428"/>
    </location>
</feature>
<feature type="domain" description="ClpX-type ZB" evidence="2">
    <location>
        <begin position="6"/>
        <end position="59"/>
    </location>
</feature>
<feature type="binding site" evidence="2">
    <location>
        <position position="18"/>
    </location>
    <ligand>
        <name>Zn(2+)</name>
        <dbReference type="ChEBI" id="CHEBI:29105"/>
    </ligand>
</feature>
<feature type="binding site" evidence="2">
    <location>
        <position position="21"/>
    </location>
    <ligand>
        <name>Zn(2+)</name>
        <dbReference type="ChEBI" id="CHEBI:29105"/>
    </ligand>
</feature>
<feature type="binding site" evidence="2">
    <location>
        <position position="40"/>
    </location>
    <ligand>
        <name>Zn(2+)</name>
        <dbReference type="ChEBI" id="CHEBI:29105"/>
    </ligand>
</feature>
<feature type="binding site" evidence="2">
    <location>
        <position position="43"/>
    </location>
    <ligand>
        <name>Zn(2+)</name>
        <dbReference type="ChEBI" id="CHEBI:29105"/>
    </ligand>
</feature>
<feature type="binding site" evidence="1">
    <location>
        <begin position="122"/>
        <end position="129"/>
    </location>
    <ligand>
        <name>ATP</name>
        <dbReference type="ChEBI" id="CHEBI:30616"/>
    </ligand>
</feature>
<name>CLPX_XANOM</name>
<accession>Q2P6Y9</accession>
<protein>
    <recommendedName>
        <fullName evidence="1">ATP-dependent Clp protease ATP-binding subunit ClpX</fullName>
    </recommendedName>
</protein>
<evidence type="ECO:0000255" key="1">
    <source>
        <dbReference type="HAMAP-Rule" id="MF_00175"/>
    </source>
</evidence>
<evidence type="ECO:0000255" key="2">
    <source>
        <dbReference type="PROSITE-ProRule" id="PRU01250"/>
    </source>
</evidence>